<dbReference type="EMBL" id="AF283503">
    <property type="protein sequence ID" value="AAL38125.1"/>
    <property type="molecule type" value="Genomic_DNA"/>
</dbReference>
<dbReference type="RefSeq" id="NP_510981.2">
    <property type="nucleotide sequence ID" value="NC_003290.1"/>
</dbReference>
<dbReference type="SMR" id="Q8WE97"/>
<dbReference type="STRING" id="37003.ENSKMAP00000000014"/>
<dbReference type="GeneID" id="804461"/>
<dbReference type="KEGG" id="kmr:804461"/>
<dbReference type="CTD" id="4519"/>
<dbReference type="OrthoDB" id="244at2759"/>
<dbReference type="Proteomes" id="UP000264800">
    <property type="component" value="Whole Genome Shotgun Assembly"/>
</dbReference>
<dbReference type="GO" id="GO:0005743">
    <property type="term" value="C:mitochondrial inner membrane"/>
    <property type="evidence" value="ECO:0007669"/>
    <property type="project" value="UniProtKB-SubCell"/>
</dbReference>
<dbReference type="GO" id="GO:0045275">
    <property type="term" value="C:respiratory chain complex III"/>
    <property type="evidence" value="ECO:0007669"/>
    <property type="project" value="InterPro"/>
</dbReference>
<dbReference type="GO" id="GO:0046872">
    <property type="term" value="F:metal ion binding"/>
    <property type="evidence" value="ECO:0007669"/>
    <property type="project" value="UniProtKB-KW"/>
</dbReference>
<dbReference type="GO" id="GO:0008121">
    <property type="term" value="F:ubiquinol-cytochrome-c reductase activity"/>
    <property type="evidence" value="ECO:0007669"/>
    <property type="project" value="InterPro"/>
</dbReference>
<dbReference type="GO" id="GO:0006122">
    <property type="term" value="P:mitochondrial electron transport, ubiquinol to cytochrome c"/>
    <property type="evidence" value="ECO:0007669"/>
    <property type="project" value="TreeGrafter"/>
</dbReference>
<dbReference type="CDD" id="cd00290">
    <property type="entry name" value="cytochrome_b_C"/>
    <property type="match status" value="1"/>
</dbReference>
<dbReference type="CDD" id="cd00284">
    <property type="entry name" value="Cytochrome_b_N"/>
    <property type="match status" value="1"/>
</dbReference>
<dbReference type="FunFam" id="1.20.810.10:FF:000002">
    <property type="entry name" value="Cytochrome b"/>
    <property type="match status" value="1"/>
</dbReference>
<dbReference type="Gene3D" id="1.20.810.10">
    <property type="entry name" value="Cytochrome Bc1 Complex, Chain C"/>
    <property type="match status" value="1"/>
</dbReference>
<dbReference type="InterPro" id="IPR005798">
    <property type="entry name" value="Cyt_b/b6_C"/>
</dbReference>
<dbReference type="InterPro" id="IPR036150">
    <property type="entry name" value="Cyt_b/b6_C_sf"/>
</dbReference>
<dbReference type="InterPro" id="IPR005797">
    <property type="entry name" value="Cyt_b/b6_N"/>
</dbReference>
<dbReference type="InterPro" id="IPR027387">
    <property type="entry name" value="Cytb/b6-like_sf"/>
</dbReference>
<dbReference type="InterPro" id="IPR030689">
    <property type="entry name" value="Cytochrome_b"/>
</dbReference>
<dbReference type="InterPro" id="IPR048260">
    <property type="entry name" value="Cytochrome_b_C_euk/bac"/>
</dbReference>
<dbReference type="InterPro" id="IPR048259">
    <property type="entry name" value="Cytochrome_b_N_euk/bac"/>
</dbReference>
<dbReference type="InterPro" id="IPR016174">
    <property type="entry name" value="Di-haem_cyt_TM"/>
</dbReference>
<dbReference type="PANTHER" id="PTHR19271">
    <property type="entry name" value="CYTOCHROME B"/>
    <property type="match status" value="1"/>
</dbReference>
<dbReference type="PANTHER" id="PTHR19271:SF16">
    <property type="entry name" value="CYTOCHROME B"/>
    <property type="match status" value="1"/>
</dbReference>
<dbReference type="Pfam" id="PF00032">
    <property type="entry name" value="Cytochrom_B_C"/>
    <property type="match status" value="1"/>
</dbReference>
<dbReference type="Pfam" id="PF00033">
    <property type="entry name" value="Cytochrome_B"/>
    <property type="match status" value="1"/>
</dbReference>
<dbReference type="PIRSF" id="PIRSF038885">
    <property type="entry name" value="COB"/>
    <property type="match status" value="1"/>
</dbReference>
<dbReference type="SUPFAM" id="SSF81648">
    <property type="entry name" value="a domain/subunit of cytochrome bc1 complex (Ubiquinol-cytochrome c reductase)"/>
    <property type="match status" value="1"/>
</dbReference>
<dbReference type="SUPFAM" id="SSF81342">
    <property type="entry name" value="Transmembrane di-heme cytochromes"/>
    <property type="match status" value="1"/>
</dbReference>
<dbReference type="PROSITE" id="PS51003">
    <property type="entry name" value="CYTB_CTER"/>
    <property type="match status" value="1"/>
</dbReference>
<dbReference type="PROSITE" id="PS51002">
    <property type="entry name" value="CYTB_NTER"/>
    <property type="match status" value="1"/>
</dbReference>
<reference key="1">
    <citation type="journal article" date="2001" name="Gene">
        <title>The complete DNA sequence of the mitochondrial genome of the self-fertilizing fish Rivulus marmoratus (Cyprinodontiformes, Rivulidae) and the first description of duplication of a control region in fish.</title>
        <authorList>
            <person name="Lee J.-S."/>
            <person name="Miya M."/>
            <person name="Lee Y.-S."/>
            <person name="Kim C.G."/>
            <person name="Park E.-H."/>
            <person name="Aoki Y."/>
            <person name="Nishida M."/>
        </authorList>
    </citation>
    <scope>NUCLEOTIDE SEQUENCE [GENOMIC DNA]</scope>
</reference>
<name>CYB_KRYMA</name>
<proteinExistence type="inferred from homology"/>
<gene>
    <name type="primary">mt-cyb</name>
    <name type="synonym">cob</name>
    <name type="synonym">cytb</name>
    <name type="synonym">mtcyb</name>
</gene>
<sequence length="391" mass="43989">MTSIRKSHLTLKALNESMIDLPAPKNISAWWNFGSLLSLCLALQILTGLFLAMHYTSDISTAFSSVVHICRDVNYGWLIRSIHANGASFFFICIYLHIGRGLYYGSYLNKEAWSAGVILLLLVMMTAFVGYVLPWGQMSFWGATVITNLLSAIPYVGENIVQWLWGGFSVDSATLTRFFAFHFLFPFGIIAMTLVHLLFLHEKGSSNPVGINSNADKIYFHPYFIYKDLIGFAWFALFLITLVLFIPNLLGDPENFTPANPLVTPPHIKPEWYFLFAYAILRSIPNKLGGVFALLASILILLIVPILHTSKWQNFAFRPLAQIFMGLLVVDVAILTWIGGMPVEPPFIIIGQIASFLYFFLFLVFFPLSGWLENKMLESCTKSSALRALVL</sequence>
<protein>
    <recommendedName>
        <fullName>Cytochrome b</fullName>
    </recommendedName>
    <alternativeName>
        <fullName>Complex III subunit 3</fullName>
    </alternativeName>
    <alternativeName>
        <fullName>Complex III subunit III</fullName>
    </alternativeName>
    <alternativeName>
        <fullName>Cytochrome b-c1 complex subunit 3</fullName>
    </alternativeName>
    <alternativeName>
        <fullName>Ubiquinol-cytochrome-c reductase complex cytochrome b subunit</fullName>
    </alternativeName>
</protein>
<evidence type="ECO:0000250" key="1"/>
<evidence type="ECO:0000250" key="2">
    <source>
        <dbReference type="UniProtKB" id="P00157"/>
    </source>
</evidence>
<evidence type="ECO:0000255" key="3">
    <source>
        <dbReference type="PROSITE-ProRule" id="PRU00967"/>
    </source>
</evidence>
<evidence type="ECO:0000255" key="4">
    <source>
        <dbReference type="PROSITE-ProRule" id="PRU00968"/>
    </source>
</evidence>
<accession>Q8WE97</accession>
<feature type="chain" id="PRO_0000061506" description="Cytochrome b">
    <location>
        <begin position="1"/>
        <end position="391"/>
    </location>
</feature>
<feature type="transmembrane region" description="Helical" evidence="2">
    <location>
        <begin position="33"/>
        <end position="53"/>
    </location>
</feature>
<feature type="transmembrane region" description="Helical" evidence="2">
    <location>
        <begin position="77"/>
        <end position="98"/>
    </location>
</feature>
<feature type="transmembrane region" description="Helical" evidence="2">
    <location>
        <begin position="113"/>
        <end position="133"/>
    </location>
</feature>
<feature type="transmembrane region" description="Helical" evidence="2">
    <location>
        <begin position="178"/>
        <end position="198"/>
    </location>
</feature>
<feature type="transmembrane region" description="Helical" evidence="2">
    <location>
        <begin position="226"/>
        <end position="246"/>
    </location>
</feature>
<feature type="transmembrane region" description="Helical" evidence="2">
    <location>
        <begin position="288"/>
        <end position="308"/>
    </location>
</feature>
<feature type="transmembrane region" description="Helical" evidence="2">
    <location>
        <begin position="320"/>
        <end position="340"/>
    </location>
</feature>
<feature type="transmembrane region" description="Helical" evidence="2">
    <location>
        <begin position="347"/>
        <end position="367"/>
    </location>
</feature>
<feature type="binding site" description="axial binding residue" evidence="2">
    <location>
        <position position="83"/>
    </location>
    <ligand>
        <name>heme b</name>
        <dbReference type="ChEBI" id="CHEBI:60344"/>
        <label>b562</label>
    </ligand>
    <ligandPart>
        <name>Fe</name>
        <dbReference type="ChEBI" id="CHEBI:18248"/>
    </ligandPart>
</feature>
<feature type="binding site" description="axial binding residue" evidence="2">
    <location>
        <position position="97"/>
    </location>
    <ligand>
        <name>heme b</name>
        <dbReference type="ChEBI" id="CHEBI:60344"/>
        <label>b566</label>
    </ligand>
    <ligandPart>
        <name>Fe</name>
        <dbReference type="ChEBI" id="CHEBI:18248"/>
    </ligandPart>
</feature>
<feature type="binding site" description="axial binding residue" evidence="2">
    <location>
        <position position="182"/>
    </location>
    <ligand>
        <name>heme b</name>
        <dbReference type="ChEBI" id="CHEBI:60344"/>
        <label>b562</label>
    </ligand>
    <ligandPart>
        <name>Fe</name>
        <dbReference type="ChEBI" id="CHEBI:18248"/>
    </ligandPart>
</feature>
<feature type="binding site" description="axial binding residue" evidence="2">
    <location>
        <position position="196"/>
    </location>
    <ligand>
        <name>heme b</name>
        <dbReference type="ChEBI" id="CHEBI:60344"/>
        <label>b566</label>
    </ligand>
    <ligandPart>
        <name>Fe</name>
        <dbReference type="ChEBI" id="CHEBI:18248"/>
    </ligandPart>
</feature>
<feature type="binding site" evidence="2">
    <location>
        <position position="201"/>
    </location>
    <ligand>
        <name>a ubiquinone</name>
        <dbReference type="ChEBI" id="CHEBI:16389"/>
    </ligand>
</feature>
<keyword id="KW-0249">Electron transport</keyword>
<keyword id="KW-0349">Heme</keyword>
<keyword id="KW-0408">Iron</keyword>
<keyword id="KW-0472">Membrane</keyword>
<keyword id="KW-0479">Metal-binding</keyword>
<keyword id="KW-0496">Mitochondrion</keyword>
<keyword id="KW-0999">Mitochondrion inner membrane</keyword>
<keyword id="KW-1185">Reference proteome</keyword>
<keyword id="KW-0679">Respiratory chain</keyword>
<keyword id="KW-0812">Transmembrane</keyword>
<keyword id="KW-1133">Transmembrane helix</keyword>
<keyword id="KW-0813">Transport</keyword>
<keyword id="KW-0830">Ubiquinone</keyword>
<geneLocation type="mitochondrion"/>
<organism>
    <name type="scientific">Kryptolebias marmoratus</name>
    <name type="common">Mangrove killifish</name>
    <name type="synonym">Rivulus marmoratus</name>
    <dbReference type="NCBI Taxonomy" id="37003"/>
    <lineage>
        <taxon>Eukaryota</taxon>
        <taxon>Metazoa</taxon>
        <taxon>Chordata</taxon>
        <taxon>Craniata</taxon>
        <taxon>Vertebrata</taxon>
        <taxon>Euteleostomi</taxon>
        <taxon>Actinopterygii</taxon>
        <taxon>Neopterygii</taxon>
        <taxon>Teleostei</taxon>
        <taxon>Neoteleostei</taxon>
        <taxon>Acanthomorphata</taxon>
        <taxon>Ovalentaria</taxon>
        <taxon>Atherinomorphae</taxon>
        <taxon>Cyprinodontiformes</taxon>
        <taxon>Rivulidae</taxon>
        <taxon>Kryptolebias</taxon>
    </lineage>
</organism>
<comment type="function">
    <text evidence="2">Component of the ubiquinol-cytochrome c reductase complex (complex III or cytochrome b-c1 complex) that is part of the mitochondrial respiratory chain. The b-c1 complex mediates electron transfer from ubiquinol to cytochrome c. Contributes to the generation of a proton gradient across the mitochondrial membrane that is then used for ATP synthesis.</text>
</comment>
<comment type="cofactor">
    <cofactor evidence="2">
        <name>heme b</name>
        <dbReference type="ChEBI" id="CHEBI:60344"/>
    </cofactor>
    <text evidence="2">Binds 2 heme b groups non-covalently.</text>
</comment>
<comment type="subunit">
    <text evidence="2">The cytochrome bc1 complex contains 3 respiratory subunits (MT-CYB, CYC1 and UQCRFS1), 2 core proteins (UQCRC1 and UQCRC2) and probably 6 low-molecular weight proteins.</text>
</comment>
<comment type="subcellular location">
    <subcellularLocation>
        <location evidence="2">Mitochondrion inner membrane</location>
        <topology evidence="2">Multi-pass membrane protein</topology>
    </subcellularLocation>
</comment>
<comment type="miscellaneous">
    <text evidence="1">Heme 1 (or BL or b562) is low-potential and absorbs at about 562 nm, and heme 2 (or BH or b566) is high-potential and absorbs at about 566 nm.</text>
</comment>
<comment type="similarity">
    <text evidence="3 4">Belongs to the cytochrome b family.</text>
</comment>
<comment type="caution">
    <text evidence="2">The full-length protein contains only eight transmembrane helices, not nine as predicted by bioinformatics tools.</text>
</comment>